<comment type="function">
    <text evidence="1">Catalyzes the transfer of a ribosyl phosphate group from 5-phosphoribose 1-diphosphate to orotate, leading to the formation of orotidine monophosphate (OMP).</text>
</comment>
<comment type="catalytic activity">
    <reaction evidence="1">
        <text>orotidine 5'-phosphate + diphosphate = orotate + 5-phospho-alpha-D-ribose 1-diphosphate</text>
        <dbReference type="Rhea" id="RHEA:10380"/>
        <dbReference type="ChEBI" id="CHEBI:30839"/>
        <dbReference type="ChEBI" id="CHEBI:33019"/>
        <dbReference type="ChEBI" id="CHEBI:57538"/>
        <dbReference type="ChEBI" id="CHEBI:58017"/>
        <dbReference type="EC" id="2.4.2.10"/>
    </reaction>
</comment>
<comment type="cofactor">
    <cofactor evidence="1">
        <name>Mg(2+)</name>
        <dbReference type="ChEBI" id="CHEBI:18420"/>
    </cofactor>
</comment>
<comment type="pathway">
    <text evidence="1">Pyrimidine metabolism; UMP biosynthesis via de novo pathway; UMP from orotate: step 1/2.</text>
</comment>
<comment type="subunit">
    <text evidence="1">Homodimer.</text>
</comment>
<comment type="similarity">
    <text evidence="1">Belongs to the purine/pyrimidine phosphoribosyltransferase family. PyrE subfamily.</text>
</comment>
<gene>
    <name evidence="1" type="primary">pyrE</name>
    <name type="ordered locus">DNO_0919</name>
</gene>
<proteinExistence type="inferred from homology"/>
<reference key="1">
    <citation type="journal article" date="2007" name="Nat. Biotechnol.">
        <title>Genome sequence and identification of candidate vaccine antigens from the animal pathogen Dichelobacter nodosus.</title>
        <authorList>
            <person name="Myers G.S.A."/>
            <person name="Parker D."/>
            <person name="Al-Hasani K."/>
            <person name="Kennan R.M."/>
            <person name="Seemann T."/>
            <person name="Ren Q."/>
            <person name="Badger J.H."/>
            <person name="Selengut J.D."/>
            <person name="Deboy R.T."/>
            <person name="Tettelin H."/>
            <person name="Boyce J.D."/>
            <person name="McCarl V.P."/>
            <person name="Han X."/>
            <person name="Nelson W.C."/>
            <person name="Madupu R."/>
            <person name="Mohamoud Y."/>
            <person name="Holley T."/>
            <person name="Fedorova N."/>
            <person name="Khouri H."/>
            <person name="Bottomley S.P."/>
            <person name="Whittington R.J."/>
            <person name="Adler B."/>
            <person name="Songer J.G."/>
            <person name="Rood J.I."/>
            <person name="Paulsen I.T."/>
        </authorList>
    </citation>
    <scope>NUCLEOTIDE SEQUENCE [LARGE SCALE GENOMIC DNA]</scope>
    <source>
        <strain>VCS1703A</strain>
    </source>
</reference>
<protein>
    <recommendedName>
        <fullName evidence="1">Orotate phosphoribosyltransferase</fullName>
        <shortName evidence="1">OPRT</shortName>
        <shortName evidence="1">OPRTase</shortName>
        <ecNumber evidence="1">2.4.2.10</ecNumber>
    </recommendedName>
</protein>
<feature type="chain" id="PRO_1000066226" description="Orotate phosphoribosyltransferase">
    <location>
        <begin position="1"/>
        <end position="221"/>
    </location>
</feature>
<feature type="binding site" description="in other chain" evidence="1">
    <location>
        <position position="27"/>
    </location>
    <ligand>
        <name>5-phospho-alpha-D-ribose 1-diphosphate</name>
        <dbReference type="ChEBI" id="CHEBI:58017"/>
        <note>ligand shared between dimeric partners</note>
    </ligand>
</feature>
<feature type="binding site" evidence="1">
    <location>
        <begin position="35"/>
        <end position="36"/>
    </location>
    <ligand>
        <name>orotate</name>
        <dbReference type="ChEBI" id="CHEBI:30839"/>
    </ligand>
</feature>
<feature type="binding site" description="in other chain" evidence="1">
    <location>
        <begin position="75"/>
        <end position="76"/>
    </location>
    <ligand>
        <name>5-phospho-alpha-D-ribose 1-diphosphate</name>
        <dbReference type="ChEBI" id="CHEBI:58017"/>
        <note>ligand shared between dimeric partners</note>
    </ligand>
</feature>
<feature type="binding site" evidence="1">
    <location>
        <position position="102"/>
    </location>
    <ligand>
        <name>5-phospho-alpha-D-ribose 1-diphosphate</name>
        <dbReference type="ChEBI" id="CHEBI:58017"/>
        <note>ligand shared between dimeric partners</note>
    </ligand>
</feature>
<feature type="binding site" description="in other chain" evidence="1">
    <location>
        <position position="103"/>
    </location>
    <ligand>
        <name>5-phospho-alpha-D-ribose 1-diphosphate</name>
        <dbReference type="ChEBI" id="CHEBI:58017"/>
        <note>ligand shared between dimeric partners</note>
    </ligand>
</feature>
<feature type="binding site" evidence="1">
    <location>
        <position position="106"/>
    </location>
    <ligand>
        <name>5-phospho-alpha-D-ribose 1-diphosphate</name>
        <dbReference type="ChEBI" id="CHEBI:58017"/>
        <note>ligand shared between dimeric partners</note>
    </ligand>
</feature>
<feature type="binding site" evidence="1">
    <location>
        <position position="108"/>
    </location>
    <ligand>
        <name>5-phospho-alpha-D-ribose 1-diphosphate</name>
        <dbReference type="ChEBI" id="CHEBI:58017"/>
        <note>ligand shared between dimeric partners</note>
    </ligand>
</feature>
<feature type="binding site" description="in other chain" evidence="1">
    <location>
        <begin position="128"/>
        <end position="136"/>
    </location>
    <ligand>
        <name>5-phospho-alpha-D-ribose 1-diphosphate</name>
        <dbReference type="ChEBI" id="CHEBI:58017"/>
        <note>ligand shared between dimeric partners</note>
    </ligand>
</feature>
<feature type="binding site" evidence="1">
    <location>
        <position position="132"/>
    </location>
    <ligand>
        <name>orotate</name>
        <dbReference type="ChEBI" id="CHEBI:30839"/>
    </ligand>
</feature>
<feature type="binding site" evidence="1">
    <location>
        <position position="160"/>
    </location>
    <ligand>
        <name>orotate</name>
        <dbReference type="ChEBI" id="CHEBI:30839"/>
    </ligand>
</feature>
<organism>
    <name type="scientific">Dichelobacter nodosus (strain VCS1703A)</name>
    <dbReference type="NCBI Taxonomy" id="246195"/>
    <lineage>
        <taxon>Bacteria</taxon>
        <taxon>Pseudomonadati</taxon>
        <taxon>Pseudomonadota</taxon>
        <taxon>Gammaproteobacteria</taxon>
        <taxon>Cardiobacteriales</taxon>
        <taxon>Cardiobacteriaceae</taxon>
        <taxon>Dichelobacter</taxon>
    </lineage>
</organism>
<dbReference type="EC" id="2.4.2.10" evidence="1"/>
<dbReference type="EMBL" id="CP000513">
    <property type="protein sequence ID" value="ABQ13487.1"/>
    <property type="molecule type" value="Genomic_DNA"/>
</dbReference>
<dbReference type="RefSeq" id="WP_012031234.1">
    <property type="nucleotide sequence ID" value="NC_009446.1"/>
</dbReference>
<dbReference type="SMR" id="A5EY64"/>
<dbReference type="STRING" id="246195.DNO_0919"/>
<dbReference type="KEGG" id="dno:DNO_0919"/>
<dbReference type="eggNOG" id="COG0461">
    <property type="taxonomic scope" value="Bacteria"/>
</dbReference>
<dbReference type="HOGENOM" id="CLU_074878_0_0_6"/>
<dbReference type="OrthoDB" id="9779060at2"/>
<dbReference type="UniPathway" id="UPA00070">
    <property type="reaction ID" value="UER00119"/>
</dbReference>
<dbReference type="Proteomes" id="UP000000248">
    <property type="component" value="Chromosome"/>
</dbReference>
<dbReference type="GO" id="GO:0005737">
    <property type="term" value="C:cytoplasm"/>
    <property type="evidence" value="ECO:0007669"/>
    <property type="project" value="TreeGrafter"/>
</dbReference>
<dbReference type="GO" id="GO:0000287">
    <property type="term" value="F:magnesium ion binding"/>
    <property type="evidence" value="ECO:0007669"/>
    <property type="project" value="UniProtKB-UniRule"/>
</dbReference>
<dbReference type="GO" id="GO:0004588">
    <property type="term" value="F:orotate phosphoribosyltransferase activity"/>
    <property type="evidence" value="ECO:0007669"/>
    <property type="project" value="UniProtKB-UniRule"/>
</dbReference>
<dbReference type="GO" id="GO:0006207">
    <property type="term" value="P:'de novo' pyrimidine nucleobase biosynthetic process"/>
    <property type="evidence" value="ECO:0007669"/>
    <property type="project" value="TreeGrafter"/>
</dbReference>
<dbReference type="GO" id="GO:0044205">
    <property type="term" value="P:'de novo' UMP biosynthetic process"/>
    <property type="evidence" value="ECO:0007669"/>
    <property type="project" value="UniProtKB-UniRule"/>
</dbReference>
<dbReference type="GO" id="GO:0046132">
    <property type="term" value="P:pyrimidine ribonucleoside biosynthetic process"/>
    <property type="evidence" value="ECO:0007669"/>
    <property type="project" value="TreeGrafter"/>
</dbReference>
<dbReference type="CDD" id="cd06223">
    <property type="entry name" value="PRTases_typeI"/>
    <property type="match status" value="1"/>
</dbReference>
<dbReference type="FunFam" id="3.40.50.2020:FF:000008">
    <property type="entry name" value="Orotate phosphoribosyltransferase"/>
    <property type="match status" value="1"/>
</dbReference>
<dbReference type="Gene3D" id="3.40.50.2020">
    <property type="match status" value="1"/>
</dbReference>
<dbReference type="HAMAP" id="MF_01208">
    <property type="entry name" value="PyrE"/>
    <property type="match status" value="1"/>
</dbReference>
<dbReference type="InterPro" id="IPR023031">
    <property type="entry name" value="OPRT"/>
</dbReference>
<dbReference type="InterPro" id="IPR004467">
    <property type="entry name" value="Or_phspho_trans_dom"/>
</dbReference>
<dbReference type="InterPro" id="IPR000836">
    <property type="entry name" value="PRibTrfase_dom"/>
</dbReference>
<dbReference type="InterPro" id="IPR029057">
    <property type="entry name" value="PRTase-like"/>
</dbReference>
<dbReference type="NCBIfam" id="TIGR00336">
    <property type="entry name" value="pyrE"/>
    <property type="match status" value="1"/>
</dbReference>
<dbReference type="PANTHER" id="PTHR46683">
    <property type="entry name" value="OROTATE PHOSPHORIBOSYLTRANSFERASE 1-RELATED"/>
    <property type="match status" value="1"/>
</dbReference>
<dbReference type="PANTHER" id="PTHR46683:SF1">
    <property type="entry name" value="OROTATE PHOSPHORIBOSYLTRANSFERASE 1-RELATED"/>
    <property type="match status" value="1"/>
</dbReference>
<dbReference type="Pfam" id="PF00156">
    <property type="entry name" value="Pribosyltran"/>
    <property type="match status" value="1"/>
</dbReference>
<dbReference type="SUPFAM" id="SSF53271">
    <property type="entry name" value="PRTase-like"/>
    <property type="match status" value="1"/>
</dbReference>
<dbReference type="PROSITE" id="PS00103">
    <property type="entry name" value="PUR_PYR_PR_TRANSFER"/>
    <property type="match status" value="1"/>
</dbReference>
<sequence length="221" mass="23929">MLAVYQTRFLEAALAADALKFGEFTLKSGRHSPYFFNAAAFCNGKLLSVMTEAYAAVIAELHETCAIDVLFGPAYKGIPLVAGIAQALFHRYDINLAWAFNRKETKTHGEGGNIVGASVAGKKVLLVDDVLTAGTAVRQSLALLAQEQAMPVGLVIALDRQEKVGDSNLSALKQFSVENQLQTRAIITLDDLMTFVKESGKPAVLEKMQAYRKIYGISEAD</sequence>
<evidence type="ECO:0000255" key="1">
    <source>
        <dbReference type="HAMAP-Rule" id="MF_01208"/>
    </source>
</evidence>
<accession>A5EY64</accession>
<keyword id="KW-0328">Glycosyltransferase</keyword>
<keyword id="KW-0460">Magnesium</keyword>
<keyword id="KW-0665">Pyrimidine biosynthesis</keyword>
<keyword id="KW-1185">Reference proteome</keyword>
<keyword id="KW-0808">Transferase</keyword>
<name>PYRE_DICNV</name>